<comment type="function">
    <text evidence="1">Specifically methylates guanosine-37 in various tRNAs.</text>
</comment>
<comment type="catalytic activity">
    <reaction evidence="1">
        <text>guanosine(37) in tRNA + S-adenosyl-L-methionine = N(1)-methylguanosine(37) in tRNA + S-adenosyl-L-homocysteine + H(+)</text>
        <dbReference type="Rhea" id="RHEA:36899"/>
        <dbReference type="Rhea" id="RHEA-COMP:10145"/>
        <dbReference type="Rhea" id="RHEA-COMP:10147"/>
        <dbReference type="ChEBI" id="CHEBI:15378"/>
        <dbReference type="ChEBI" id="CHEBI:57856"/>
        <dbReference type="ChEBI" id="CHEBI:59789"/>
        <dbReference type="ChEBI" id="CHEBI:73542"/>
        <dbReference type="ChEBI" id="CHEBI:74269"/>
        <dbReference type="EC" id="2.1.1.228"/>
    </reaction>
</comment>
<comment type="subunit">
    <text evidence="1">Homodimer.</text>
</comment>
<comment type="subcellular location">
    <subcellularLocation>
        <location evidence="1">Cytoplasm</location>
    </subcellularLocation>
</comment>
<comment type="similarity">
    <text evidence="1">Belongs to the RNA methyltransferase TrmD family.</text>
</comment>
<feature type="chain" id="PRO_0000060476" description="tRNA (guanine-N(1)-)-methyltransferase">
    <location>
        <begin position="1"/>
        <end position="282"/>
    </location>
</feature>
<feature type="binding site" evidence="1">
    <location>
        <begin position="145"/>
        <end position="150"/>
    </location>
    <ligand>
        <name>S-adenosyl-L-methionine</name>
        <dbReference type="ChEBI" id="CHEBI:59789"/>
    </ligand>
</feature>
<proteinExistence type="inferred from homology"/>
<keyword id="KW-0963">Cytoplasm</keyword>
<keyword id="KW-0489">Methyltransferase</keyword>
<keyword id="KW-1185">Reference proteome</keyword>
<keyword id="KW-0949">S-adenosyl-L-methionine</keyword>
<keyword id="KW-0808">Transferase</keyword>
<keyword id="KW-0819">tRNA processing</keyword>
<protein>
    <recommendedName>
        <fullName evidence="1">tRNA (guanine-N(1)-)-methyltransferase</fullName>
        <ecNumber evidence="1">2.1.1.228</ecNumber>
    </recommendedName>
    <alternativeName>
        <fullName evidence="1">M1G-methyltransferase</fullName>
    </alternativeName>
    <alternativeName>
        <fullName evidence="1">tRNA [GM37] methyltransferase</fullName>
    </alternativeName>
</protein>
<accession>Q82JW3</accession>
<gene>
    <name evidence="1" type="primary">trmD</name>
    <name type="ordered locus">SAV_2641</name>
</gene>
<dbReference type="EC" id="2.1.1.228" evidence="1"/>
<dbReference type="EMBL" id="BA000030">
    <property type="protein sequence ID" value="BAC70352.1"/>
    <property type="molecule type" value="Genomic_DNA"/>
</dbReference>
<dbReference type="RefSeq" id="WP_010984076.1">
    <property type="nucleotide sequence ID" value="NZ_JZJK01000071.1"/>
</dbReference>
<dbReference type="SMR" id="Q82JW3"/>
<dbReference type="GeneID" id="41539723"/>
<dbReference type="KEGG" id="sma:SAVERM_2641"/>
<dbReference type="eggNOG" id="COG0336">
    <property type="taxonomic scope" value="Bacteria"/>
</dbReference>
<dbReference type="HOGENOM" id="CLU_047363_0_0_11"/>
<dbReference type="OrthoDB" id="9807416at2"/>
<dbReference type="Proteomes" id="UP000000428">
    <property type="component" value="Chromosome"/>
</dbReference>
<dbReference type="GO" id="GO:0005829">
    <property type="term" value="C:cytosol"/>
    <property type="evidence" value="ECO:0007669"/>
    <property type="project" value="TreeGrafter"/>
</dbReference>
<dbReference type="GO" id="GO:0052906">
    <property type="term" value="F:tRNA (guanine(37)-N1)-methyltransferase activity"/>
    <property type="evidence" value="ECO:0007669"/>
    <property type="project" value="UniProtKB-UniRule"/>
</dbReference>
<dbReference type="GO" id="GO:0002939">
    <property type="term" value="P:tRNA N1-guanine methylation"/>
    <property type="evidence" value="ECO:0007669"/>
    <property type="project" value="TreeGrafter"/>
</dbReference>
<dbReference type="CDD" id="cd18080">
    <property type="entry name" value="TrmD-like"/>
    <property type="match status" value="1"/>
</dbReference>
<dbReference type="FunFam" id="1.10.1270.20:FF:000002">
    <property type="entry name" value="tRNA (guanine-N(1)-)-methyltransferase"/>
    <property type="match status" value="1"/>
</dbReference>
<dbReference type="FunFam" id="3.40.1280.10:FF:000001">
    <property type="entry name" value="tRNA (guanine-N(1)-)-methyltransferase"/>
    <property type="match status" value="1"/>
</dbReference>
<dbReference type="Gene3D" id="3.40.1280.10">
    <property type="match status" value="1"/>
</dbReference>
<dbReference type="Gene3D" id="1.10.1270.20">
    <property type="entry name" value="tRNA(m1g37)methyltransferase, domain 2"/>
    <property type="match status" value="1"/>
</dbReference>
<dbReference type="HAMAP" id="MF_00605">
    <property type="entry name" value="TrmD"/>
    <property type="match status" value="1"/>
</dbReference>
<dbReference type="InterPro" id="IPR029028">
    <property type="entry name" value="Alpha/beta_knot_MTases"/>
</dbReference>
<dbReference type="InterPro" id="IPR023148">
    <property type="entry name" value="tRNA_m1G_MeTrfase_C_sf"/>
</dbReference>
<dbReference type="InterPro" id="IPR002649">
    <property type="entry name" value="tRNA_m1G_MeTrfase_TrmD"/>
</dbReference>
<dbReference type="InterPro" id="IPR029026">
    <property type="entry name" value="tRNA_m1G_MTases_N"/>
</dbReference>
<dbReference type="InterPro" id="IPR016009">
    <property type="entry name" value="tRNA_MeTrfase_TRMD/TRM10"/>
</dbReference>
<dbReference type="NCBIfam" id="NF000648">
    <property type="entry name" value="PRK00026.1"/>
    <property type="match status" value="1"/>
</dbReference>
<dbReference type="NCBIfam" id="TIGR00088">
    <property type="entry name" value="trmD"/>
    <property type="match status" value="1"/>
</dbReference>
<dbReference type="PANTHER" id="PTHR46417">
    <property type="entry name" value="TRNA (GUANINE-N(1)-)-METHYLTRANSFERASE"/>
    <property type="match status" value="1"/>
</dbReference>
<dbReference type="PANTHER" id="PTHR46417:SF1">
    <property type="entry name" value="TRNA (GUANINE-N(1)-)-METHYLTRANSFERASE"/>
    <property type="match status" value="1"/>
</dbReference>
<dbReference type="Pfam" id="PF01746">
    <property type="entry name" value="tRNA_m1G_MT"/>
    <property type="match status" value="1"/>
</dbReference>
<dbReference type="PIRSF" id="PIRSF000386">
    <property type="entry name" value="tRNA_mtase"/>
    <property type="match status" value="1"/>
</dbReference>
<dbReference type="SUPFAM" id="SSF75217">
    <property type="entry name" value="alpha/beta knot"/>
    <property type="match status" value="1"/>
</dbReference>
<evidence type="ECO:0000255" key="1">
    <source>
        <dbReference type="HAMAP-Rule" id="MF_00605"/>
    </source>
</evidence>
<name>TRMD_STRAW</name>
<organism>
    <name type="scientific">Streptomyces avermitilis (strain ATCC 31267 / DSM 46492 / JCM 5070 / NBRC 14893 / NCIMB 12804 / NRRL 8165 / MA-4680)</name>
    <dbReference type="NCBI Taxonomy" id="227882"/>
    <lineage>
        <taxon>Bacteria</taxon>
        <taxon>Bacillati</taxon>
        <taxon>Actinomycetota</taxon>
        <taxon>Actinomycetes</taxon>
        <taxon>Kitasatosporales</taxon>
        <taxon>Streptomycetaceae</taxon>
        <taxon>Streptomyces</taxon>
    </lineage>
</organism>
<reference key="1">
    <citation type="journal article" date="2001" name="Proc. Natl. Acad. Sci. U.S.A.">
        <title>Genome sequence of an industrial microorganism Streptomyces avermitilis: deducing the ability of producing secondary metabolites.</title>
        <authorList>
            <person name="Omura S."/>
            <person name="Ikeda H."/>
            <person name="Ishikawa J."/>
            <person name="Hanamoto A."/>
            <person name="Takahashi C."/>
            <person name="Shinose M."/>
            <person name="Takahashi Y."/>
            <person name="Horikawa H."/>
            <person name="Nakazawa H."/>
            <person name="Osonoe T."/>
            <person name="Kikuchi H."/>
            <person name="Shiba T."/>
            <person name="Sakaki Y."/>
            <person name="Hattori M."/>
        </authorList>
    </citation>
    <scope>NUCLEOTIDE SEQUENCE [LARGE SCALE GENOMIC DNA]</scope>
    <source>
        <strain>ATCC 31267 / DSM 46492 / JCM 5070 / NBRC 14893 / NCIMB 12804 / NRRL 8165 / MA-4680</strain>
    </source>
</reference>
<reference key="2">
    <citation type="journal article" date="2003" name="Nat. Biotechnol.">
        <title>Complete genome sequence and comparative analysis of the industrial microorganism Streptomyces avermitilis.</title>
        <authorList>
            <person name="Ikeda H."/>
            <person name="Ishikawa J."/>
            <person name="Hanamoto A."/>
            <person name="Shinose M."/>
            <person name="Kikuchi H."/>
            <person name="Shiba T."/>
            <person name="Sakaki Y."/>
            <person name="Hattori M."/>
            <person name="Omura S."/>
        </authorList>
    </citation>
    <scope>NUCLEOTIDE SEQUENCE [LARGE SCALE GENOMIC DNA]</scope>
    <source>
        <strain>ATCC 31267 / DSM 46492 / JCM 5070 / NBRC 14893 / NCIMB 12804 / NRRL 8165 / MA-4680</strain>
    </source>
</reference>
<sequence length="282" mass="31638">MRHGTLRVDVVTIFPEYLEPLNVSLVGKARARGQLNVHVHDLREWTYDRHNTVDDTPYGGGPGMVMKTEPWGDALDSVLADGYETDAHGPALIVPTPSGRPFTQELAVELSERPWLVFTPARYEGIDRRVIDEYATRMPVYEVSIGDYVLAGGEAAVLVITEAVARLLPGVLGNAESHRDDSFAPGAMANLLEGPVYTKPPAWRDREIPEVLLSGHHGRIARWRRDEALKRTTANRPDLIERCDPSAFDKKDREMLSILGWFPDPDGVPHGRFWRRPEAMEE</sequence>